<gene>
    <name type="ordered locus">AF_1552</name>
</gene>
<evidence type="ECO:0000255" key="1"/>
<evidence type="ECO:0000305" key="2"/>
<sequence length="270" mass="29580">MVWFRCMRYGEAAIVLSAVLMGTVSVFVRNVGGDTLSVTFLRLFFGFLAVLPFCLRDVGRPDRTLLGLAVFNFLTVASYIAAIQSTEVAMAALLLYMAPVYVIPLSVLMGERVEVKTLLALPLGLIGLYLMLTPYAELTFGIIFGIVSGLSYAIVFVLSKEARKKHSPWRITFYNLGLGSAALLPYFLMFGRVGSWLWAIGLGVVPTAVPFVLFSYGMKYVKVQRAPILALIEPLCAGLVGYFYFGETLTLTQLIGGAMILAGVLIAWRE</sequence>
<reference key="1">
    <citation type="journal article" date="1997" name="Nature">
        <title>The complete genome sequence of the hyperthermophilic, sulphate-reducing archaeon Archaeoglobus fulgidus.</title>
        <authorList>
            <person name="Klenk H.-P."/>
            <person name="Clayton R.A."/>
            <person name="Tomb J.-F."/>
            <person name="White O."/>
            <person name="Nelson K.E."/>
            <person name="Ketchum K.A."/>
            <person name="Dodson R.J."/>
            <person name="Gwinn M.L."/>
            <person name="Hickey E.K."/>
            <person name="Peterson J.D."/>
            <person name="Richardson D.L."/>
            <person name="Kerlavage A.R."/>
            <person name="Graham D.E."/>
            <person name="Kyrpides N.C."/>
            <person name="Fleischmann R.D."/>
            <person name="Quackenbush J."/>
            <person name="Lee N.H."/>
            <person name="Sutton G.G."/>
            <person name="Gill S.R."/>
            <person name="Kirkness E.F."/>
            <person name="Dougherty B.A."/>
            <person name="McKenney K."/>
            <person name="Adams M.D."/>
            <person name="Loftus B.J."/>
            <person name="Peterson S.N."/>
            <person name="Reich C.I."/>
            <person name="McNeil L.K."/>
            <person name="Badger J.H."/>
            <person name="Glodek A."/>
            <person name="Zhou L."/>
            <person name="Overbeek R."/>
            <person name="Gocayne J.D."/>
            <person name="Weidman J.F."/>
            <person name="McDonald L.A."/>
            <person name="Utterback T.R."/>
            <person name="Cotton M.D."/>
            <person name="Spriggs T."/>
            <person name="Artiach P."/>
            <person name="Kaine B.P."/>
            <person name="Sykes S.M."/>
            <person name="Sadow P.W."/>
            <person name="D'Andrea K.P."/>
            <person name="Bowman C."/>
            <person name="Fujii C."/>
            <person name="Garland S.A."/>
            <person name="Mason T.M."/>
            <person name="Olsen G.J."/>
            <person name="Fraser C.M."/>
            <person name="Smith H.O."/>
            <person name="Woese C.R."/>
            <person name="Venter J.C."/>
        </authorList>
    </citation>
    <scope>NUCLEOTIDE SEQUENCE [LARGE SCALE GENOMIC DNA]</scope>
    <source>
        <strain>ATCC 49558 / DSM 4304 / JCM 9628 / NBRC 100126 / VC-16</strain>
    </source>
</reference>
<comment type="subcellular location">
    <subcellularLocation>
        <location evidence="2">Cell membrane</location>
        <topology evidence="2">Multi-pass membrane protein</topology>
    </subcellularLocation>
</comment>
<comment type="similarity">
    <text evidence="2">Belongs to the EamA transporter family.</text>
</comment>
<proteinExistence type="inferred from homology"/>
<name>Y1552_ARCFU</name>
<protein>
    <recommendedName>
        <fullName>Uncharacterized transporter AF_1552</fullName>
    </recommendedName>
</protein>
<organism>
    <name type="scientific">Archaeoglobus fulgidus (strain ATCC 49558 / DSM 4304 / JCM 9628 / NBRC 100126 / VC-16)</name>
    <dbReference type="NCBI Taxonomy" id="224325"/>
    <lineage>
        <taxon>Archaea</taxon>
        <taxon>Methanobacteriati</taxon>
        <taxon>Methanobacteriota</taxon>
        <taxon>Archaeoglobi</taxon>
        <taxon>Archaeoglobales</taxon>
        <taxon>Archaeoglobaceae</taxon>
        <taxon>Archaeoglobus</taxon>
    </lineage>
</organism>
<dbReference type="EMBL" id="AE000782">
    <property type="protein sequence ID" value="AAB89694.1"/>
    <property type="molecule type" value="Genomic_DNA"/>
</dbReference>
<dbReference type="PIR" id="G69443">
    <property type="entry name" value="G69443"/>
</dbReference>
<dbReference type="SMR" id="O28720"/>
<dbReference type="STRING" id="224325.AF_1552"/>
<dbReference type="PaxDb" id="224325-AF_1552"/>
<dbReference type="EnsemblBacteria" id="AAB89694">
    <property type="protein sequence ID" value="AAB89694"/>
    <property type="gene ID" value="AF_1552"/>
</dbReference>
<dbReference type="KEGG" id="afu:AF_1552"/>
<dbReference type="eggNOG" id="arCOG00271">
    <property type="taxonomic scope" value="Archaea"/>
</dbReference>
<dbReference type="HOGENOM" id="CLU_033863_9_1_2"/>
<dbReference type="PhylomeDB" id="O28720"/>
<dbReference type="Proteomes" id="UP000002199">
    <property type="component" value="Chromosome"/>
</dbReference>
<dbReference type="GO" id="GO:0005886">
    <property type="term" value="C:plasma membrane"/>
    <property type="evidence" value="ECO:0007669"/>
    <property type="project" value="UniProtKB-SubCell"/>
</dbReference>
<dbReference type="Gene3D" id="1.10.3730.20">
    <property type="match status" value="1"/>
</dbReference>
<dbReference type="InterPro" id="IPR004779">
    <property type="entry name" value="CO/AA/NH_transpt"/>
</dbReference>
<dbReference type="InterPro" id="IPR000620">
    <property type="entry name" value="EamA_dom"/>
</dbReference>
<dbReference type="NCBIfam" id="TIGR00950">
    <property type="entry name" value="2A78"/>
    <property type="match status" value="1"/>
</dbReference>
<dbReference type="PANTHER" id="PTHR22911">
    <property type="entry name" value="ACYL-MALONYL CONDENSING ENZYME-RELATED"/>
    <property type="match status" value="1"/>
</dbReference>
<dbReference type="PANTHER" id="PTHR22911:SF79">
    <property type="entry name" value="MOBA-LIKE NTP TRANSFERASE DOMAIN-CONTAINING PROTEIN"/>
    <property type="match status" value="1"/>
</dbReference>
<dbReference type="Pfam" id="PF00892">
    <property type="entry name" value="EamA"/>
    <property type="match status" value="2"/>
</dbReference>
<dbReference type="SUPFAM" id="SSF103481">
    <property type="entry name" value="Multidrug resistance efflux transporter EmrE"/>
    <property type="match status" value="2"/>
</dbReference>
<keyword id="KW-1003">Cell membrane</keyword>
<keyword id="KW-0472">Membrane</keyword>
<keyword id="KW-1185">Reference proteome</keyword>
<keyword id="KW-0677">Repeat</keyword>
<keyword id="KW-0812">Transmembrane</keyword>
<keyword id="KW-1133">Transmembrane helix</keyword>
<keyword id="KW-0813">Transport</keyword>
<accession>O28720</accession>
<feature type="chain" id="PRO_0000108205" description="Uncharacterized transporter AF_1552">
    <location>
        <begin position="1"/>
        <end position="270"/>
    </location>
</feature>
<feature type="transmembrane region" description="Helical" evidence="1">
    <location>
        <begin position="12"/>
        <end position="32"/>
    </location>
</feature>
<feature type="transmembrane region" description="Helical" evidence="1">
    <location>
        <begin position="35"/>
        <end position="55"/>
    </location>
</feature>
<feature type="transmembrane region" description="Helical" evidence="1">
    <location>
        <begin position="64"/>
        <end position="84"/>
    </location>
</feature>
<feature type="transmembrane region" description="Helical" evidence="1">
    <location>
        <begin position="88"/>
        <end position="108"/>
    </location>
</feature>
<feature type="transmembrane region" description="Helical" evidence="1">
    <location>
        <begin position="117"/>
        <end position="137"/>
    </location>
</feature>
<feature type="transmembrane region" description="Helical" evidence="1">
    <location>
        <begin position="138"/>
        <end position="158"/>
    </location>
</feature>
<feature type="transmembrane region" description="Helical" evidence="1">
    <location>
        <begin position="171"/>
        <end position="191"/>
    </location>
</feature>
<feature type="transmembrane region" description="Helical" evidence="1">
    <location>
        <begin position="194"/>
        <end position="214"/>
    </location>
</feature>
<feature type="transmembrane region" description="Helical" evidence="1">
    <location>
        <begin position="226"/>
        <end position="246"/>
    </location>
</feature>
<feature type="transmembrane region" description="Helical" evidence="1">
    <location>
        <begin position="248"/>
        <end position="268"/>
    </location>
</feature>
<feature type="domain" description="EamA 1">
    <location>
        <begin position="19"/>
        <end position="133"/>
    </location>
</feature>
<feature type="domain" description="EamA 2">
    <location>
        <begin position="150"/>
        <end position="269"/>
    </location>
</feature>